<accession>Q55FV7</accession>
<feature type="chain" id="PRO_0000348151" description="Uncharacterized protein DDB_G0267930">
    <location>
        <begin position="1"/>
        <end position="83"/>
    </location>
</feature>
<sequence length="83" mass="9228">MNKVVSINIAEILKSHATHKSLMVRNKNFLRSSNGSVPIYSNSILQPPTTATNNNNENNFNLVNDTIDDLELAIENAGGKQFW</sequence>
<gene>
    <name type="ORF">DDB_G0267930</name>
</gene>
<protein>
    <recommendedName>
        <fullName>Uncharacterized protein DDB_G0267930</fullName>
    </recommendedName>
</protein>
<keyword id="KW-1185">Reference proteome</keyword>
<dbReference type="EMBL" id="AAFI02000003">
    <property type="protein sequence ID" value="EAL73418.1"/>
    <property type="molecule type" value="Genomic_DNA"/>
</dbReference>
<dbReference type="RefSeq" id="XP_647426.1">
    <property type="nucleotide sequence ID" value="XM_642334.1"/>
</dbReference>
<dbReference type="FunCoup" id="Q55FV7">
    <property type="interactions" value="640"/>
</dbReference>
<dbReference type="PaxDb" id="44689-DDB0238238"/>
<dbReference type="EnsemblProtists" id="EAL73418">
    <property type="protein sequence ID" value="EAL73418"/>
    <property type="gene ID" value="DDB_G0267930"/>
</dbReference>
<dbReference type="GeneID" id="8616233"/>
<dbReference type="KEGG" id="ddi:DDB_G0267930"/>
<dbReference type="dictyBase" id="DDB_G0267930"/>
<dbReference type="VEuPathDB" id="AmoebaDB:DDB_G0267930"/>
<dbReference type="HOGENOM" id="CLU_2547326_0_0_1"/>
<dbReference type="InParanoid" id="Q55FV7"/>
<dbReference type="OMA" id="QSTKMIN"/>
<dbReference type="PRO" id="PR:Q55FV7"/>
<dbReference type="Proteomes" id="UP000002195">
    <property type="component" value="Chromosome 1"/>
</dbReference>
<name>Y8238_DICDI</name>
<organism>
    <name type="scientific">Dictyostelium discoideum</name>
    <name type="common">Social amoeba</name>
    <dbReference type="NCBI Taxonomy" id="44689"/>
    <lineage>
        <taxon>Eukaryota</taxon>
        <taxon>Amoebozoa</taxon>
        <taxon>Evosea</taxon>
        <taxon>Eumycetozoa</taxon>
        <taxon>Dictyostelia</taxon>
        <taxon>Dictyosteliales</taxon>
        <taxon>Dictyosteliaceae</taxon>
        <taxon>Dictyostelium</taxon>
    </lineage>
</organism>
<reference key="1">
    <citation type="journal article" date="2005" name="Nature">
        <title>The genome of the social amoeba Dictyostelium discoideum.</title>
        <authorList>
            <person name="Eichinger L."/>
            <person name="Pachebat J.A."/>
            <person name="Gloeckner G."/>
            <person name="Rajandream M.A."/>
            <person name="Sucgang R."/>
            <person name="Berriman M."/>
            <person name="Song J."/>
            <person name="Olsen R."/>
            <person name="Szafranski K."/>
            <person name="Xu Q."/>
            <person name="Tunggal B."/>
            <person name="Kummerfeld S."/>
            <person name="Madera M."/>
            <person name="Konfortov B.A."/>
            <person name="Rivero F."/>
            <person name="Bankier A.T."/>
            <person name="Lehmann R."/>
            <person name="Hamlin N."/>
            <person name="Davies R."/>
            <person name="Gaudet P."/>
            <person name="Fey P."/>
            <person name="Pilcher K."/>
            <person name="Chen G."/>
            <person name="Saunders D."/>
            <person name="Sodergren E.J."/>
            <person name="Davis P."/>
            <person name="Kerhornou A."/>
            <person name="Nie X."/>
            <person name="Hall N."/>
            <person name="Anjard C."/>
            <person name="Hemphill L."/>
            <person name="Bason N."/>
            <person name="Farbrother P."/>
            <person name="Desany B."/>
            <person name="Just E."/>
            <person name="Morio T."/>
            <person name="Rost R."/>
            <person name="Churcher C.M."/>
            <person name="Cooper J."/>
            <person name="Haydock S."/>
            <person name="van Driessche N."/>
            <person name="Cronin A."/>
            <person name="Goodhead I."/>
            <person name="Muzny D.M."/>
            <person name="Mourier T."/>
            <person name="Pain A."/>
            <person name="Lu M."/>
            <person name="Harper D."/>
            <person name="Lindsay R."/>
            <person name="Hauser H."/>
            <person name="James K.D."/>
            <person name="Quiles M."/>
            <person name="Madan Babu M."/>
            <person name="Saito T."/>
            <person name="Buchrieser C."/>
            <person name="Wardroper A."/>
            <person name="Felder M."/>
            <person name="Thangavelu M."/>
            <person name="Johnson D."/>
            <person name="Knights A."/>
            <person name="Loulseged H."/>
            <person name="Mungall K.L."/>
            <person name="Oliver K."/>
            <person name="Price C."/>
            <person name="Quail M.A."/>
            <person name="Urushihara H."/>
            <person name="Hernandez J."/>
            <person name="Rabbinowitsch E."/>
            <person name="Steffen D."/>
            <person name="Sanders M."/>
            <person name="Ma J."/>
            <person name="Kohara Y."/>
            <person name="Sharp S."/>
            <person name="Simmonds M.N."/>
            <person name="Spiegler S."/>
            <person name="Tivey A."/>
            <person name="Sugano S."/>
            <person name="White B."/>
            <person name="Walker D."/>
            <person name="Woodward J.R."/>
            <person name="Winckler T."/>
            <person name="Tanaka Y."/>
            <person name="Shaulsky G."/>
            <person name="Schleicher M."/>
            <person name="Weinstock G.M."/>
            <person name="Rosenthal A."/>
            <person name="Cox E.C."/>
            <person name="Chisholm R.L."/>
            <person name="Gibbs R.A."/>
            <person name="Loomis W.F."/>
            <person name="Platzer M."/>
            <person name="Kay R.R."/>
            <person name="Williams J.G."/>
            <person name="Dear P.H."/>
            <person name="Noegel A.A."/>
            <person name="Barrell B.G."/>
            <person name="Kuspa A."/>
        </authorList>
    </citation>
    <scope>NUCLEOTIDE SEQUENCE [LARGE SCALE GENOMIC DNA]</scope>
    <source>
        <strain>AX4</strain>
    </source>
</reference>
<proteinExistence type="predicted"/>